<comment type="catalytic activity">
    <reaction>
        <text>(2R,3R)-tartrate = oxaloacetate + H2O</text>
        <dbReference type="Rhea" id="RHEA:15413"/>
        <dbReference type="ChEBI" id="CHEBI:15377"/>
        <dbReference type="ChEBI" id="CHEBI:16452"/>
        <dbReference type="ChEBI" id="CHEBI:30924"/>
        <dbReference type="EC" id="4.2.1.32"/>
    </reaction>
</comment>
<comment type="subunit">
    <text evidence="1">Heterotetramer of two alpha and two beta subunits.</text>
</comment>
<comment type="induction">
    <text evidence="1">Induced by tartrate, via TtdR.</text>
</comment>
<comment type="similarity">
    <text evidence="3">Belongs to the class-I fumarase family.</text>
</comment>
<reference key="1">
    <citation type="journal article" date="2006" name="Mol. Microbiol.">
        <title>Role of pathogenicity island-associated integrases in the genome plasticity of uropathogenic Escherichia coli strain 536.</title>
        <authorList>
            <person name="Hochhut B."/>
            <person name="Wilde C."/>
            <person name="Balling G."/>
            <person name="Middendorf B."/>
            <person name="Dobrindt U."/>
            <person name="Brzuszkiewicz E."/>
            <person name="Gottschalk G."/>
            <person name="Carniel E."/>
            <person name="Hacker J."/>
        </authorList>
    </citation>
    <scope>NUCLEOTIDE SEQUENCE [LARGE SCALE GENOMIC DNA]</scope>
    <source>
        <strain>536 / UPEC</strain>
    </source>
</reference>
<feature type="chain" id="PRO_0000262703" description="L(+)-tartrate dehydratase subunit beta">
    <location>
        <begin position="1"/>
        <end position="201"/>
    </location>
</feature>
<feature type="active site" evidence="2">
    <location>
        <position position="37"/>
    </location>
</feature>
<name>TTDB_ECOL5</name>
<sequence>MKKILTTPIKAEDLQDIRVGDVIYLTGTLVTCRDVCHRRLIELKRPIPYDLNGKAIFHAGPIVRKNGDKWEMVSVGPTTSMRMESFEREFIEQTGVKLVVGKGGMGPLTEEGCQKFKALHVIFPAGCAVLAATQVEEIEEVHWTELGMPESLWVCRVKEFGPLIVSIDTHGNNLIAENKKLFAERRDPIVEEICEHVHYIK</sequence>
<gene>
    <name type="primary">ttdB</name>
    <name type="ordered locus">ECP_3152</name>
</gene>
<evidence type="ECO:0000250" key="1"/>
<evidence type="ECO:0000255" key="2"/>
<evidence type="ECO:0000305" key="3"/>
<keyword id="KW-0456">Lyase</keyword>
<organism>
    <name type="scientific">Escherichia coli O6:K15:H31 (strain 536 / UPEC)</name>
    <dbReference type="NCBI Taxonomy" id="362663"/>
    <lineage>
        <taxon>Bacteria</taxon>
        <taxon>Pseudomonadati</taxon>
        <taxon>Pseudomonadota</taxon>
        <taxon>Gammaproteobacteria</taxon>
        <taxon>Enterobacterales</taxon>
        <taxon>Enterobacteriaceae</taxon>
        <taxon>Escherichia</taxon>
    </lineage>
</organism>
<dbReference type="EC" id="4.2.1.32"/>
<dbReference type="EMBL" id="CP000247">
    <property type="protein sequence ID" value="ABG71135.1"/>
    <property type="molecule type" value="Genomic_DNA"/>
</dbReference>
<dbReference type="RefSeq" id="WP_000722957.1">
    <property type="nucleotide sequence ID" value="NC_008253.1"/>
</dbReference>
<dbReference type="SMR" id="Q0TD44"/>
<dbReference type="GeneID" id="86861212"/>
<dbReference type="KEGG" id="ecp:ECP_3152"/>
<dbReference type="HOGENOM" id="CLU_098588_0_0_6"/>
<dbReference type="Proteomes" id="UP000009182">
    <property type="component" value="Chromosome"/>
</dbReference>
<dbReference type="GO" id="GO:0008730">
    <property type="term" value="F:L(+)-tartrate dehydratase activity"/>
    <property type="evidence" value="ECO:0007669"/>
    <property type="project" value="UniProtKB-EC"/>
</dbReference>
<dbReference type="FunFam" id="3.20.130.10:FF:000002">
    <property type="entry name" value="L(+)-tartrate dehydratase subunit beta"/>
    <property type="match status" value="1"/>
</dbReference>
<dbReference type="Gene3D" id="3.20.130.10">
    <property type="entry name" value="Fe-S hydro-lyase, tartrate dehydratase beta-type, catalytic domain"/>
    <property type="match status" value="1"/>
</dbReference>
<dbReference type="InterPro" id="IPR004647">
    <property type="entry name" value="Fe-S_hydro-lyase_TtdB-typ_cat"/>
</dbReference>
<dbReference type="InterPro" id="IPR036660">
    <property type="entry name" value="Fe-S_hydroAse_TtdB_cat_sf"/>
</dbReference>
<dbReference type="NCBIfam" id="NF006082">
    <property type="entry name" value="PRK08228.1"/>
    <property type="match status" value="1"/>
</dbReference>
<dbReference type="NCBIfam" id="TIGR00723">
    <property type="entry name" value="ttdB_fumA_fumB"/>
    <property type="match status" value="1"/>
</dbReference>
<dbReference type="PANTHER" id="PTHR43351">
    <property type="entry name" value="L(+)-TARTRATE DEHYDRATASE SUBUNIT BETA"/>
    <property type="match status" value="1"/>
</dbReference>
<dbReference type="PANTHER" id="PTHR43351:SF3">
    <property type="entry name" value="L(+)-TARTRATE DEHYDRATASE SUBUNIT BETA"/>
    <property type="match status" value="1"/>
</dbReference>
<dbReference type="Pfam" id="PF05683">
    <property type="entry name" value="Fumerase_C"/>
    <property type="match status" value="1"/>
</dbReference>
<dbReference type="SUPFAM" id="SSF117457">
    <property type="entry name" value="FumA C-terminal domain-like"/>
    <property type="match status" value="1"/>
</dbReference>
<accession>Q0TD44</accession>
<proteinExistence type="inferred from homology"/>
<protein>
    <recommendedName>
        <fullName>L(+)-tartrate dehydratase subunit beta</fullName>
        <shortName>L-TTD beta</shortName>
        <ecNumber>4.2.1.32</ecNumber>
    </recommendedName>
</protein>